<dbReference type="EC" id="2.7.7.6" evidence="1"/>
<dbReference type="EMBL" id="AE017180">
    <property type="protein sequence ID" value="AAR36255.1"/>
    <property type="molecule type" value="Genomic_DNA"/>
</dbReference>
<dbReference type="RefSeq" id="NP_953905.1">
    <property type="nucleotide sequence ID" value="NC_002939.5"/>
</dbReference>
<dbReference type="RefSeq" id="WP_010943493.1">
    <property type="nucleotide sequence ID" value="NC_002939.5"/>
</dbReference>
<dbReference type="SMR" id="Q748Y6"/>
<dbReference type="FunCoup" id="Q748Y6">
    <property type="interactions" value="571"/>
</dbReference>
<dbReference type="STRING" id="243231.GSU2863"/>
<dbReference type="EnsemblBacteria" id="AAR36255">
    <property type="protein sequence ID" value="AAR36255"/>
    <property type="gene ID" value="GSU2863"/>
</dbReference>
<dbReference type="KEGG" id="gsu:GSU2863"/>
<dbReference type="PATRIC" id="fig|243231.5.peg.2891"/>
<dbReference type="eggNOG" id="COG0085">
    <property type="taxonomic scope" value="Bacteria"/>
</dbReference>
<dbReference type="HOGENOM" id="CLU_000524_4_0_7"/>
<dbReference type="InParanoid" id="Q748Y6"/>
<dbReference type="OrthoDB" id="9803954at2"/>
<dbReference type="Proteomes" id="UP000000577">
    <property type="component" value="Chromosome"/>
</dbReference>
<dbReference type="GO" id="GO:0000428">
    <property type="term" value="C:DNA-directed RNA polymerase complex"/>
    <property type="evidence" value="ECO:0007669"/>
    <property type="project" value="UniProtKB-KW"/>
</dbReference>
<dbReference type="GO" id="GO:0003677">
    <property type="term" value="F:DNA binding"/>
    <property type="evidence" value="ECO:0007669"/>
    <property type="project" value="UniProtKB-UniRule"/>
</dbReference>
<dbReference type="GO" id="GO:0003899">
    <property type="term" value="F:DNA-directed RNA polymerase activity"/>
    <property type="evidence" value="ECO:0007669"/>
    <property type="project" value="UniProtKB-UniRule"/>
</dbReference>
<dbReference type="GO" id="GO:0032549">
    <property type="term" value="F:ribonucleoside binding"/>
    <property type="evidence" value="ECO:0007669"/>
    <property type="project" value="InterPro"/>
</dbReference>
<dbReference type="GO" id="GO:0006351">
    <property type="term" value="P:DNA-templated transcription"/>
    <property type="evidence" value="ECO:0007669"/>
    <property type="project" value="UniProtKB-UniRule"/>
</dbReference>
<dbReference type="CDD" id="cd00653">
    <property type="entry name" value="RNA_pol_B_RPB2"/>
    <property type="match status" value="1"/>
</dbReference>
<dbReference type="FunFam" id="2.40.50.100:FF:000006">
    <property type="entry name" value="DNA-directed RNA polymerase subunit beta"/>
    <property type="match status" value="1"/>
</dbReference>
<dbReference type="FunFam" id="3.90.1800.10:FF:000001">
    <property type="entry name" value="DNA-directed RNA polymerase subunit beta"/>
    <property type="match status" value="1"/>
</dbReference>
<dbReference type="Gene3D" id="2.40.50.100">
    <property type="match status" value="1"/>
</dbReference>
<dbReference type="Gene3D" id="2.40.50.150">
    <property type="match status" value="1"/>
</dbReference>
<dbReference type="Gene3D" id="3.90.1100.10">
    <property type="match status" value="2"/>
</dbReference>
<dbReference type="Gene3D" id="2.30.150.10">
    <property type="entry name" value="DNA-directed RNA polymerase, beta subunit, external 1 domain"/>
    <property type="match status" value="1"/>
</dbReference>
<dbReference type="Gene3D" id="2.40.270.10">
    <property type="entry name" value="DNA-directed RNA polymerase, subunit 2, domain 6"/>
    <property type="match status" value="1"/>
</dbReference>
<dbReference type="Gene3D" id="3.90.1800.10">
    <property type="entry name" value="RNA polymerase alpha subunit dimerisation domain"/>
    <property type="match status" value="1"/>
</dbReference>
<dbReference type="Gene3D" id="3.90.1110.10">
    <property type="entry name" value="RNA polymerase Rpb2, domain 2"/>
    <property type="match status" value="1"/>
</dbReference>
<dbReference type="HAMAP" id="MF_01321">
    <property type="entry name" value="RNApol_bact_RpoB"/>
    <property type="match status" value="1"/>
</dbReference>
<dbReference type="InterPro" id="IPR042107">
    <property type="entry name" value="DNA-dir_RNA_pol_bsu_ext_1_sf"/>
</dbReference>
<dbReference type="InterPro" id="IPR019462">
    <property type="entry name" value="DNA-dir_RNA_pol_bsu_external_1"/>
</dbReference>
<dbReference type="InterPro" id="IPR015712">
    <property type="entry name" value="DNA-dir_RNA_pol_su2"/>
</dbReference>
<dbReference type="InterPro" id="IPR007120">
    <property type="entry name" value="DNA-dir_RNAP_su2_dom"/>
</dbReference>
<dbReference type="InterPro" id="IPR037033">
    <property type="entry name" value="DNA-dir_RNAP_su2_hyb_sf"/>
</dbReference>
<dbReference type="InterPro" id="IPR010243">
    <property type="entry name" value="RNA_pol_bsu_bac"/>
</dbReference>
<dbReference type="InterPro" id="IPR007121">
    <property type="entry name" value="RNA_pol_bsu_CS"/>
</dbReference>
<dbReference type="InterPro" id="IPR007644">
    <property type="entry name" value="RNA_pol_bsu_protrusion"/>
</dbReference>
<dbReference type="InterPro" id="IPR007642">
    <property type="entry name" value="RNA_pol_Rpb2_2"/>
</dbReference>
<dbReference type="InterPro" id="IPR037034">
    <property type="entry name" value="RNA_pol_Rpb2_2_sf"/>
</dbReference>
<dbReference type="InterPro" id="IPR007645">
    <property type="entry name" value="RNA_pol_Rpb2_3"/>
</dbReference>
<dbReference type="InterPro" id="IPR007641">
    <property type="entry name" value="RNA_pol_Rpb2_7"/>
</dbReference>
<dbReference type="InterPro" id="IPR014724">
    <property type="entry name" value="RNA_pol_RPB2_OB-fold"/>
</dbReference>
<dbReference type="NCBIfam" id="NF001616">
    <property type="entry name" value="PRK00405.1"/>
    <property type="match status" value="1"/>
</dbReference>
<dbReference type="NCBIfam" id="TIGR02013">
    <property type="entry name" value="rpoB"/>
    <property type="match status" value="1"/>
</dbReference>
<dbReference type="PANTHER" id="PTHR20856">
    <property type="entry name" value="DNA-DIRECTED RNA POLYMERASE I SUBUNIT 2"/>
    <property type="match status" value="1"/>
</dbReference>
<dbReference type="Pfam" id="PF04563">
    <property type="entry name" value="RNA_pol_Rpb2_1"/>
    <property type="match status" value="1"/>
</dbReference>
<dbReference type="Pfam" id="PF04561">
    <property type="entry name" value="RNA_pol_Rpb2_2"/>
    <property type="match status" value="2"/>
</dbReference>
<dbReference type="Pfam" id="PF04565">
    <property type="entry name" value="RNA_pol_Rpb2_3"/>
    <property type="match status" value="1"/>
</dbReference>
<dbReference type="Pfam" id="PF10385">
    <property type="entry name" value="RNA_pol_Rpb2_45"/>
    <property type="match status" value="1"/>
</dbReference>
<dbReference type="Pfam" id="PF00562">
    <property type="entry name" value="RNA_pol_Rpb2_6"/>
    <property type="match status" value="1"/>
</dbReference>
<dbReference type="Pfam" id="PF04560">
    <property type="entry name" value="RNA_pol_Rpb2_7"/>
    <property type="match status" value="1"/>
</dbReference>
<dbReference type="SUPFAM" id="SSF64484">
    <property type="entry name" value="beta and beta-prime subunits of DNA dependent RNA-polymerase"/>
    <property type="match status" value="1"/>
</dbReference>
<dbReference type="PROSITE" id="PS01166">
    <property type="entry name" value="RNA_POL_BETA"/>
    <property type="match status" value="1"/>
</dbReference>
<reference key="1">
    <citation type="journal article" date="2003" name="Science">
        <title>Genome of Geobacter sulfurreducens: metal reduction in subsurface environments.</title>
        <authorList>
            <person name="Methe B.A."/>
            <person name="Nelson K.E."/>
            <person name="Eisen J.A."/>
            <person name="Paulsen I.T."/>
            <person name="Nelson W.C."/>
            <person name="Heidelberg J.F."/>
            <person name="Wu D."/>
            <person name="Wu M."/>
            <person name="Ward N.L."/>
            <person name="Beanan M.J."/>
            <person name="Dodson R.J."/>
            <person name="Madupu R."/>
            <person name="Brinkac L.M."/>
            <person name="Daugherty S.C."/>
            <person name="DeBoy R.T."/>
            <person name="Durkin A.S."/>
            <person name="Gwinn M.L."/>
            <person name="Kolonay J.F."/>
            <person name="Sullivan S.A."/>
            <person name="Haft D.H."/>
            <person name="Selengut J."/>
            <person name="Davidsen T.M."/>
            <person name="Zafar N."/>
            <person name="White O."/>
            <person name="Tran B."/>
            <person name="Romero C."/>
            <person name="Forberger H.A."/>
            <person name="Weidman J.F."/>
            <person name="Khouri H.M."/>
            <person name="Feldblyum T.V."/>
            <person name="Utterback T.R."/>
            <person name="Van Aken S.E."/>
            <person name="Lovley D.R."/>
            <person name="Fraser C.M."/>
        </authorList>
    </citation>
    <scope>NUCLEOTIDE SEQUENCE [LARGE SCALE GENOMIC DNA]</scope>
    <source>
        <strain>ATCC 51573 / DSM 12127 / PCA</strain>
    </source>
</reference>
<comment type="function">
    <text evidence="1">DNA-dependent RNA polymerase catalyzes the transcription of DNA into RNA using the four ribonucleoside triphosphates as substrates.</text>
</comment>
<comment type="catalytic activity">
    <reaction evidence="1">
        <text>RNA(n) + a ribonucleoside 5'-triphosphate = RNA(n+1) + diphosphate</text>
        <dbReference type="Rhea" id="RHEA:21248"/>
        <dbReference type="Rhea" id="RHEA-COMP:14527"/>
        <dbReference type="Rhea" id="RHEA-COMP:17342"/>
        <dbReference type="ChEBI" id="CHEBI:33019"/>
        <dbReference type="ChEBI" id="CHEBI:61557"/>
        <dbReference type="ChEBI" id="CHEBI:140395"/>
        <dbReference type="EC" id="2.7.7.6"/>
    </reaction>
</comment>
<comment type="subunit">
    <text evidence="1">The RNAP catalytic core consists of 2 alpha, 1 beta, 1 beta' and 1 omega subunit. When a sigma factor is associated with the core the holoenzyme is formed, which can initiate transcription.</text>
</comment>
<comment type="similarity">
    <text evidence="1">Belongs to the RNA polymerase beta chain family.</text>
</comment>
<name>RPOB_GEOSL</name>
<organism>
    <name type="scientific">Geobacter sulfurreducens (strain ATCC 51573 / DSM 12127 / PCA)</name>
    <dbReference type="NCBI Taxonomy" id="243231"/>
    <lineage>
        <taxon>Bacteria</taxon>
        <taxon>Pseudomonadati</taxon>
        <taxon>Thermodesulfobacteriota</taxon>
        <taxon>Desulfuromonadia</taxon>
        <taxon>Geobacterales</taxon>
        <taxon>Geobacteraceae</taxon>
        <taxon>Geobacter</taxon>
    </lineage>
</organism>
<keyword id="KW-0240">DNA-directed RNA polymerase</keyword>
<keyword id="KW-0548">Nucleotidyltransferase</keyword>
<keyword id="KW-1185">Reference proteome</keyword>
<keyword id="KW-0804">Transcription</keyword>
<keyword id="KW-0808">Transferase</keyword>
<proteinExistence type="inferred from homology"/>
<accession>Q748Y6</accession>
<evidence type="ECO:0000255" key="1">
    <source>
        <dbReference type="HAMAP-Rule" id="MF_01321"/>
    </source>
</evidence>
<protein>
    <recommendedName>
        <fullName evidence="1">DNA-directed RNA polymerase subunit beta</fullName>
        <shortName evidence="1">RNAP subunit beta</shortName>
        <ecNumber evidence="1">2.7.7.6</ecNumber>
    </recommendedName>
    <alternativeName>
        <fullName evidence="1">RNA polymerase subunit beta</fullName>
    </alternativeName>
    <alternativeName>
        <fullName evidence="1">Transcriptase subunit beta</fullName>
    </alternativeName>
</protein>
<feature type="chain" id="PRO_0000224060" description="DNA-directed RNA polymerase subunit beta">
    <location>
        <begin position="1"/>
        <end position="1370"/>
    </location>
</feature>
<sequence length="1370" mass="152508">MAYSIANNQLLRKNFAKIKKIIDIPNLIDIQKNSYKRFLQIDTPPEARKNSGLEAVFKSVFPIKDFSDTASLEYVTYTLGAPKYDVEECHQRGMTFAAPMKVKVRLVVWDVNKDTGVRSIRDIKEQEVYFGEIPLMTENGTFIINGTERVIVSQLHRSPGVFYDHDKGKTHSSGKVLYSARVIPYRGSWLDFEFDHKDILFVRIDRRRKMPATVLLKALGYSAEALLNYFYKSEEILVAAEGMWKKADPELLASQKASVDIVAPKTGEVLLKANRKFTKAAIRKMTEHGITQIPITMEEVLGKYASNDIVDPSTGEVIVECNDEITQARLDDIKAKGITEFKVLFIDNLHVTSSLRDTLIADKIAATEEALIEIYRRLRPGDPPTLKSAQALFENLFFNAERYDLSAVGRLKLNFKLGLNVPLDCQTLTKDDVLEVVRYLIDLKNGKGTIDDIDHLGNRRVRAVGELLENQYRIGLVRMERAIKERMSLQEVENLMPHDLINSKPVSAVVKEFFGSSQLSQFMDQTNPLSEVTHKRRLSALGPGGLTRERAGFEVRDVHPTHYGRVCPIETPEGPNIGLIASLSTYARINEHGFVETPYRIVQDGKVTSDVKFFSALEEEGHAIAQANAEMDADGRFVNEYVSARKSGEFLLVHRDELELMDVAPMQLVSVAASLIPFLENDDANRALMGSNMQRQAVPLLKADSPLVGTGMERVVAKDSGVSVVARHTGIVESVDASRIVVKIDEDEFDETGTGVDIYNLIKFARSNQNTCINQRPVVKVGDHVKRGDVIADGPSTDMGELALGQNVVVAFMPWGGYNFEDSILVSEKLVKDDRYTSIHIEEFECVARDTKLGKEEITSDIPNLGEEALKDLDESGIIRIGAEVKPGDILVGKITPKGETQLSPEEKLLRAIFGEKAGDVRDTSLRVPPGVEGTVIGAKIFSRKGADKDSRTEMIERMEEDKLRKDEQDEIRIIRNSAVGKLKKLLVGKSAAVKVEDKSGRTVIAKGAAITEEALDAIPLDRWDEISVSGEAGVDEKVSAILQTLQQQIDIIRYVFDDKVQKLKRGDDLPPGVIKMVKVYIAIKRKLQVGDKMAGRHGNKGVVSRILPEEDMPYMEDGRPVEIVLNPLGVPSRMNVGQILETHLGWAAKGIGWKIEEMLESYSPADHIKGYLKDVYGTTEMDTFLDSLDKDELMNVAKRLQRGVAMASPVFEGASEEQIRSMLDKAGFDETAQVSLYDGKSGEPFKHKVTVGVMYVLKLHHLVDDKIHARSIGPYSLVTQQPLGGKAQFGGQRLGEMEVWAMEAYGAAYALQEFLTVKSDDVAGRTRMYEAIVKGKHTLEPGLPESFNVLIKELQSLCLDVELLEGDED</sequence>
<gene>
    <name evidence="1" type="primary">rpoB</name>
    <name type="ordered locus">GSU2863</name>
</gene>